<name>UPP_BACCZ</name>
<comment type="function">
    <text evidence="1">Catalyzes the conversion of uracil and 5-phospho-alpha-D-ribose 1-diphosphate (PRPP) to UMP and diphosphate.</text>
</comment>
<comment type="catalytic activity">
    <reaction evidence="1">
        <text>UMP + diphosphate = 5-phospho-alpha-D-ribose 1-diphosphate + uracil</text>
        <dbReference type="Rhea" id="RHEA:13017"/>
        <dbReference type="ChEBI" id="CHEBI:17568"/>
        <dbReference type="ChEBI" id="CHEBI:33019"/>
        <dbReference type="ChEBI" id="CHEBI:57865"/>
        <dbReference type="ChEBI" id="CHEBI:58017"/>
        <dbReference type="EC" id="2.4.2.9"/>
    </reaction>
</comment>
<comment type="cofactor">
    <cofactor evidence="1">
        <name>Mg(2+)</name>
        <dbReference type="ChEBI" id="CHEBI:18420"/>
    </cofactor>
    <text evidence="1">Binds 1 Mg(2+) ion per subunit. The magnesium is bound as Mg-PRPP.</text>
</comment>
<comment type="activity regulation">
    <text evidence="1">Allosterically activated by GTP.</text>
</comment>
<comment type="pathway">
    <text evidence="1">Pyrimidine metabolism; UMP biosynthesis via salvage pathway; UMP from uracil: step 1/1.</text>
</comment>
<comment type="similarity">
    <text evidence="1">Belongs to the UPRTase family.</text>
</comment>
<evidence type="ECO:0000255" key="1">
    <source>
        <dbReference type="HAMAP-Rule" id="MF_01218"/>
    </source>
</evidence>
<dbReference type="EC" id="2.4.2.9" evidence="1"/>
<dbReference type="EMBL" id="CP000001">
    <property type="protein sequence ID" value="AAU15267.1"/>
    <property type="molecule type" value="Genomic_DNA"/>
</dbReference>
<dbReference type="RefSeq" id="WP_000517539.1">
    <property type="nucleotide sequence ID" value="NZ_CP009968.1"/>
</dbReference>
<dbReference type="SMR" id="Q630T4"/>
<dbReference type="GeneID" id="93005808"/>
<dbReference type="KEGG" id="bcz:BCE33L5014"/>
<dbReference type="PATRIC" id="fig|288681.22.peg.331"/>
<dbReference type="UniPathway" id="UPA00574">
    <property type="reaction ID" value="UER00636"/>
</dbReference>
<dbReference type="Proteomes" id="UP000002612">
    <property type="component" value="Chromosome"/>
</dbReference>
<dbReference type="GO" id="GO:0005525">
    <property type="term" value="F:GTP binding"/>
    <property type="evidence" value="ECO:0007669"/>
    <property type="project" value="UniProtKB-KW"/>
</dbReference>
<dbReference type="GO" id="GO:0000287">
    <property type="term" value="F:magnesium ion binding"/>
    <property type="evidence" value="ECO:0007669"/>
    <property type="project" value="UniProtKB-UniRule"/>
</dbReference>
<dbReference type="GO" id="GO:0004845">
    <property type="term" value="F:uracil phosphoribosyltransferase activity"/>
    <property type="evidence" value="ECO:0007669"/>
    <property type="project" value="UniProtKB-UniRule"/>
</dbReference>
<dbReference type="GO" id="GO:0044206">
    <property type="term" value="P:UMP salvage"/>
    <property type="evidence" value="ECO:0007669"/>
    <property type="project" value="UniProtKB-UniRule"/>
</dbReference>
<dbReference type="GO" id="GO:0006223">
    <property type="term" value="P:uracil salvage"/>
    <property type="evidence" value="ECO:0007669"/>
    <property type="project" value="InterPro"/>
</dbReference>
<dbReference type="CDD" id="cd06223">
    <property type="entry name" value="PRTases_typeI"/>
    <property type="match status" value="1"/>
</dbReference>
<dbReference type="FunFam" id="3.40.50.2020:FF:000003">
    <property type="entry name" value="Uracil phosphoribosyltransferase"/>
    <property type="match status" value="1"/>
</dbReference>
<dbReference type="Gene3D" id="3.40.50.2020">
    <property type="match status" value="1"/>
</dbReference>
<dbReference type="HAMAP" id="MF_01218_B">
    <property type="entry name" value="Upp_B"/>
    <property type="match status" value="1"/>
</dbReference>
<dbReference type="InterPro" id="IPR000836">
    <property type="entry name" value="PRibTrfase_dom"/>
</dbReference>
<dbReference type="InterPro" id="IPR029057">
    <property type="entry name" value="PRTase-like"/>
</dbReference>
<dbReference type="InterPro" id="IPR034332">
    <property type="entry name" value="Upp_B"/>
</dbReference>
<dbReference type="InterPro" id="IPR050054">
    <property type="entry name" value="UPRTase/APRTase"/>
</dbReference>
<dbReference type="InterPro" id="IPR005765">
    <property type="entry name" value="Ura_phspho_trans"/>
</dbReference>
<dbReference type="NCBIfam" id="NF001097">
    <property type="entry name" value="PRK00129.1"/>
    <property type="match status" value="1"/>
</dbReference>
<dbReference type="NCBIfam" id="TIGR01091">
    <property type="entry name" value="upp"/>
    <property type="match status" value="1"/>
</dbReference>
<dbReference type="PANTHER" id="PTHR32315">
    <property type="entry name" value="ADENINE PHOSPHORIBOSYLTRANSFERASE"/>
    <property type="match status" value="1"/>
</dbReference>
<dbReference type="PANTHER" id="PTHR32315:SF4">
    <property type="entry name" value="URACIL PHOSPHORIBOSYLTRANSFERASE, CHLOROPLASTIC"/>
    <property type="match status" value="1"/>
</dbReference>
<dbReference type="Pfam" id="PF14681">
    <property type="entry name" value="UPRTase"/>
    <property type="match status" value="1"/>
</dbReference>
<dbReference type="SUPFAM" id="SSF53271">
    <property type="entry name" value="PRTase-like"/>
    <property type="match status" value="1"/>
</dbReference>
<gene>
    <name evidence="1" type="primary">upp</name>
    <name type="ordered locus">BCE33L5014</name>
</gene>
<protein>
    <recommendedName>
        <fullName evidence="1">Uracil phosphoribosyltransferase</fullName>
        <ecNumber evidence="1">2.4.2.9</ecNumber>
    </recommendedName>
    <alternativeName>
        <fullName evidence="1">UMP pyrophosphorylase</fullName>
    </alternativeName>
    <alternativeName>
        <fullName evidence="1">UPRTase</fullName>
    </alternativeName>
</protein>
<keyword id="KW-0021">Allosteric enzyme</keyword>
<keyword id="KW-0328">Glycosyltransferase</keyword>
<keyword id="KW-0342">GTP-binding</keyword>
<keyword id="KW-0460">Magnesium</keyword>
<keyword id="KW-0547">Nucleotide-binding</keyword>
<keyword id="KW-0808">Transferase</keyword>
<reference key="1">
    <citation type="journal article" date="2006" name="J. Bacteriol.">
        <title>Pathogenomic sequence analysis of Bacillus cereus and Bacillus thuringiensis isolates closely related to Bacillus anthracis.</title>
        <authorList>
            <person name="Han C.S."/>
            <person name="Xie G."/>
            <person name="Challacombe J.F."/>
            <person name="Altherr M.R."/>
            <person name="Bhotika S.S."/>
            <person name="Bruce D."/>
            <person name="Campbell C.S."/>
            <person name="Campbell M.L."/>
            <person name="Chen J."/>
            <person name="Chertkov O."/>
            <person name="Cleland C."/>
            <person name="Dimitrijevic M."/>
            <person name="Doggett N.A."/>
            <person name="Fawcett J.J."/>
            <person name="Glavina T."/>
            <person name="Goodwin L.A."/>
            <person name="Hill K.K."/>
            <person name="Hitchcock P."/>
            <person name="Jackson P.J."/>
            <person name="Keim P."/>
            <person name="Kewalramani A.R."/>
            <person name="Longmire J."/>
            <person name="Lucas S."/>
            <person name="Malfatti S."/>
            <person name="McMurry K."/>
            <person name="Meincke L.J."/>
            <person name="Misra M."/>
            <person name="Moseman B.L."/>
            <person name="Mundt M."/>
            <person name="Munk A.C."/>
            <person name="Okinaka R.T."/>
            <person name="Parson-Quintana B."/>
            <person name="Reilly L.P."/>
            <person name="Richardson P."/>
            <person name="Robinson D.L."/>
            <person name="Rubin E."/>
            <person name="Saunders E."/>
            <person name="Tapia R."/>
            <person name="Tesmer J.G."/>
            <person name="Thayer N."/>
            <person name="Thompson L.S."/>
            <person name="Tice H."/>
            <person name="Ticknor L.O."/>
            <person name="Wills P.L."/>
            <person name="Brettin T.S."/>
            <person name="Gilna P."/>
        </authorList>
    </citation>
    <scope>NUCLEOTIDE SEQUENCE [LARGE SCALE GENOMIC DNA]</scope>
    <source>
        <strain>ZK / E33L</strain>
    </source>
</reference>
<sequence length="209" mass="22901">MGKLYVFDHPLIQHKITYIRDKNTGTKDFRELVDEVASLMAFEITRDLPLKDIEIETPVSKATTKVIAGKKLGLIPILRAGLGMVDGILKLIPAAKVGHVGLYRDPKTLQPVEYYVKLPTDVEERDFIVLDPMLATGGSAAEAINSLKKRGAKQIKLMCIVAAPEGVKVVQEEHPDVDIYVAALDEKLNDHGYVVPGLGDAGDRLFGTK</sequence>
<proteinExistence type="inferred from homology"/>
<feature type="chain" id="PRO_0000120797" description="Uracil phosphoribosyltransferase">
    <location>
        <begin position="1"/>
        <end position="209"/>
    </location>
</feature>
<feature type="binding site" evidence="1">
    <location>
        <position position="79"/>
    </location>
    <ligand>
        <name>5-phospho-alpha-D-ribose 1-diphosphate</name>
        <dbReference type="ChEBI" id="CHEBI:58017"/>
    </ligand>
</feature>
<feature type="binding site" evidence="1">
    <location>
        <position position="104"/>
    </location>
    <ligand>
        <name>5-phospho-alpha-D-ribose 1-diphosphate</name>
        <dbReference type="ChEBI" id="CHEBI:58017"/>
    </ligand>
</feature>
<feature type="binding site" evidence="1">
    <location>
        <begin position="131"/>
        <end position="139"/>
    </location>
    <ligand>
        <name>5-phospho-alpha-D-ribose 1-diphosphate</name>
        <dbReference type="ChEBI" id="CHEBI:58017"/>
    </ligand>
</feature>
<feature type="binding site" evidence="1">
    <location>
        <position position="194"/>
    </location>
    <ligand>
        <name>uracil</name>
        <dbReference type="ChEBI" id="CHEBI:17568"/>
    </ligand>
</feature>
<feature type="binding site" evidence="1">
    <location>
        <begin position="199"/>
        <end position="201"/>
    </location>
    <ligand>
        <name>uracil</name>
        <dbReference type="ChEBI" id="CHEBI:17568"/>
    </ligand>
</feature>
<feature type="binding site" evidence="1">
    <location>
        <position position="200"/>
    </location>
    <ligand>
        <name>5-phospho-alpha-D-ribose 1-diphosphate</name>
        <dbReference type="ChEBI" id="CHEBI:58017"/>
    </ligand>
</feature>
<organism>
    <name type="scientific">Bacillus cereus (strain ZK / E33L)</name>
    <dbReference type="NCBI Taxonomy" id="288681"/>
    <lineage>
        <taxon>Bacteria</taxon>
        <taxon>Bacillati</taxon>
        <taxon>Bacillota</taxon>
        <taxon>Bacilli</taxon>
        <taxon>Bacillales</taxon>
        <taxon>Bacillaceae</taxon>
        <taxon>Bacillus</taxon>
        <taxon>Bacillus cereus group</taxon>
    </lineage>
</organism>
<accession>Q630T4</accession>